<accession>F1QC45</accession>
<accession>F1D694</accession>
<accession>Q802Z6</accession>
<organism evidence="9">
    <name type="scientific">Danio rerio</name>
    <name type="common">Zebrafish</name>
    <name type="synonym">Brachydanio rerio</name>
    <dbReference type="NCBI Taxonomy" id="7955"/>
    <lineage>
        <taxon>Eukaryota</taxon>
        <taxon>Metazoa</taxon>
        <taxon>Chordata</taxon>
        <taxon>Craniata</taxon>
        <taxon>Vertebrata</taxon>
        <taxon>Euteleostomi</taxon>
        <taxon>Actinopterygii</taxon>
        <taxon>Neopterygii</taxon>
        <taxon>Teleostei</taxon>
        <taxon>Ostariophysi</taxon>
        <taxon>Cypriniformes</taxon>
        <taxon>Danionidae</taxon>
        <taxon>Danioninae</taxon>
        <taxon>Danio</taxon>
    </lineage>
</organism>
<comment type="function">
    <text evidence="1 5">Acts as a GTPase-activating protein (GAP) involved in trafficking between the Golgi and the ciliary membrane (By similarity). Acts as a GTPase-activating protein (GAP) for tubulin in concert with tubulin-specific chaperone C, but does not enhance tubulin heterodimerization (By similarity). In the retina, required for maintenance of rod and cone photoreceptor cells (PubMed:26034134). May have a role in normal retinal localization of the transducins GNB1 and GNAT1, and the rhodopsin kinase GRK1 (PubMed:26034134).</text>
</comment>
<comment type="subcellular location">
    <subcellularLocation>
        <location evidence="5">Cell membrane</location>
        <topology evidence="1">Lipid-anchor</topology>
        <orientation evidence="1">Cytoplasmic side</orientation>
    </subcellularLocation>
    <subcellularLocation>
        <location evidence="1">Cell projection</location>
        <location evidence="1">Cilium</location>
    </subcellularLocation>
</comment>
<comment type="tissue specificity">
    <text evidence="4 5">In the retina, detected in both rod and cone photoreceptors (at protein level) (PubMed:21282572, PubMed:26034134). Has strongest expression in the retinal outer nuclear layer (ONL) and weaker expression in the outer plexiform layer (OPL) and inner plexiform layer (IPL) (at protein level) (PubMed:26034134). Expressed in all tissues tested (PubMed:21282572).</text>
</comment>
<comment type="developmental stage">
    <text evidence="4">Expressed throughout development.</text>
</comment>
<comment type="PTM">
    <text evidence="1">Myristoylated on Gly-2; which may be required for membrane targeting.</text>
</comment>
<comment type="PTM">
    <text evidence="1">Palmitoylated on Cys-3; which may be required for plasma membrane targeting.</text>
</comment>
<comment type="disruption phenotype">
    <text evidence="5">Viable and fertile. Early retinal development appears to be grossly normal. Outer segments of rod and cone photoreceptors show progressive degeneration from 2 months of age, with rod cells more severely affected in the early stages.</text>
</comment>
<comment type="similarity">
    <text evidence="6">Belongs to the TBCC family.</text>
</comment>
<comment type="sequence caution" evidence="6">
    <conflict type="frameshift">
        <sequence resource="EMBL-CDS" id="AAH46879"/>
    </conflict>
</comment>
<comment type="sequence caution" evidence="6">
    <conflict type="miscellaneous discrepancy">
        <sequence resource="EMBL-CDS" id="AAI64845"/>
    </conflict>
    <text>Contaminating sequence. Sequence of unknown origin at the N terminus.</text>
</comment>
<gene>
    <name evidence="10" type="primary">rp2</name>
</gene>
<reference evidence="8" key="1">
    <citation type="journal article" date="2011" name="Invest. Ophthalmol. Vis. Sci.">
        <title>Knockdown of the zebrafish ortholog of the retinitis pigmentosa 2 (RP2) gene results in retinal degeneration.</title>
        <authorList>
            <person name="Shu X."/>
            <person name="Zeng Z."/>
            <person name="Gautier P."/>
            <person name="Lennon A."/>
            <person name="Gakovic M."/>
            <person name="Cheetham M.E."/>
            <person name="Patton E.E."/>
            <person name="Wright A.F."/>
        </authorList>
    </citation>
    <scope>NUCLEOTIDE SEQUENCE [MRNA]</scope>
    <scope>TISSUE SPECIFICITY</scope>
    <scope>DEVELOPMENTAL STAGE</scope>
</reference>
<reference evidence="9" key="2">
    <citation type="journal article" date="2013" name="Nature">
        <title>The zebrafish reference genome sequence and its relationship to the human genome.</title>
        <authorList>
            <person name="Howe K."/>
            <person name="Clark M.D."/>
            <person name="Torroja C.F."/>
            <person name="Torrance J."/>
            <person name="Berthelot C."/>
            <person name="Muffato M."/>
            <person name="Collins J.E."/>
            <person name="Humphray S."/>
            <person name="McLaren K."/>
            <person name="Matthews L."/>
            <person name="McLaren S."/>
            <person name="Sealy I."/>
            <person name="Caccamo M."/>
            <person name="Churcher C."/>
            <person name="Scott C."/>
            <person name="Barrett J.C."/>
            <person name="Koch R."/>
            <person name="Rauch G.J."/>
            <person name="White S."/>
            <person name="Chow W."/>
            <person name="Kilian B."/>
            <person name="Quintais L.T."/>
            <person name="Guerra-Assuncao J.A."/>
            <person name="Zhou Y."/>
            <person name="Gu Y."/>
            <person name="Yen J."/>
            <person name="Vogel J.H."/>
            <person name="Eyre T."/>
            <person name="Redmond S."/>
            <person name="Banerjee R."/>
            <person name="Chi J."/>
            <person name="Fu B."/>
            <person name="Langley E."/>
            <person name="Maguire S.F."/>
            <person name="Laird G.K."/>
            <person name="Lloyd D."/>
            <person name="Kenyon E."/>
            <person name="Donaldson S."/>
            <person name="Sehra H."/>
            <person name="Almeida-King J."/>
            <person name="Loveland J."/>
            <person name="Trevanion S."/>
            <person name="Jones M."/>
            <person name="Quail M."/>
            <person name="Willey D."/>
            <person name="Hunt A."/>
            <person name="Burton J."/>
            <person name="Sims S."/>
            <person name="McLay K."/>
            <person name="Plumb B."/>
            <person name="Davis J."/>
            <person name="Clee C."/>
            <person name="Oliver K."/>
            <person name="Clark R."/>
            <person name="Riddle C."/>
            <person name="Elliot D."/>
            <person name="Threadgold G."/>
            <person name="Harden G."/>
            <person name="Ware D."/>
            <person name="Begum S."/>
            <person name="Mortimore B."/>
            <person name="Kerry G."/>
            <person name="Heath P."/>
            <person name="Phillimore B."/>
            <person name="Tracey A."/>
            <person name="Corby N."/>
            <person name="Dunn M."/>
            <person name="Johnson C."/>
            <person name="Wood J."/>
            <person name="Clark S."/>
            <person name="Pelan S."/>
            <person name="Griffiths G."/>
            <person name="Smith M."/>
            <person name="Glithero R."/>
            <person name="Howden P."/>
            <person name="Barker N."/>
            <person name="Lloyd C."/>
            <person name="Stevens C."/>
            <person name="Harley J."/>
            <person name="Holt K."/>
            <person name="Panagiotidis G."/>
            <person name="Lovell J."/>
            <person name="Beasley H."/>
            <person name="Henderson C."/>
            <person name="Gordon D."/>
            <person name="Auger K."/>
            <person name="Wright D."/>
            <person name="Collins J."/>
            <person name="Raisen C."/>
            <person name="Dyer L."/>
            <person name="Leung K."/>
            <person name="Robertson L."/>
            <person name="Ambridge K."/>
            <person name="Leongamornlert D."/>
            <person name="McGuire S."/>
            <person name="Gilderthorp R."/>
            <person name="Griffiths C."/>
            <person name="Manthravadi D."/>
            <person name="Nichol S."/>
            <person name="Barker G."/>
            <person name="Whitehead S."/>
            <person name="Kay M."/>
            <person name="Brown J."/>
            <person name="Murnane C."/>
            <person name="Gray E."/>
            <person name="Humphries M."/>
            <person name="Sycamore N."/>
            <person name="Barker D."/>
            <person name="Saunders D."/>
            <person name="Wallis J."/>
            <person name="Babbage A."/>
            <person name="Hammond S."/>
            <person name="Mashreghi-Mohammadi M."/>
            <person name="Barr L."/>
            <person name="Martin S."/>
            <person name="Wray P."/>
            <person name="Ellington A."/>
            <person name="Matthews N."/>
            <person name="Ellwood M."/>
            <person name="Woodmansey R."/>
            <person name="Clark G."/>
            <person name="Cooper J."/>
            <person name="Tromans A."/>
            <person name="Grafham D."/>
            <person name="Skuce C."/>
            <person name="Pandian R."/>
            <person name="Andrews R."/>
            <person name="Harrison E."/>
            <person name="Kimberley A."/>
            <person name="Garnett J."/>
            <person name="Fosker N."/>
            <person name="Hall R."/>
            <person name="Garner P."/>
            <person name="Kelly D."/>
            <person name="Bird C."/>
            <person name="Palmer S."/>
            <person name="Gehring I."/>
            <person name="Berger A."/>
            <person name="Dooley C.M."/>
            <person name="Ersan-Urun Z."/>
            <person name="Eser C."/>
            <person name="Geiger H."/>
            <person name="Geisler M."/>
            <person name="Karotki L."/>
            <person name="Kirn A."/>
            <person name="Konantz J."/>
            <person name="Konantz M."/>
            <person name="Oberlander M."/>
            <person name="Rudolph-Geiger S."/>
            <person name="Teucke M."/>
            <person name="Lanz C."/>
            <person name="Raddatz G."/>
            <person name="Osoegawa K."/>
            <person name="Zhu B."/>
            <person name="Rapp A."/>
            <person name="Widaa S."/>
            <person name="Langford C."/>
            <person name="Yang F."/>
            <person name="Schuster S.C."/>
            <person name="Carter N.P."/>
            <person name="Harrow J."/>
            <person name="Ning Z."/>
            <person name="Herrero J."/>
            <person name="Searle S.M."/>
            <person name="Enright A."/>
            <person name="Geisler R."/>
            <person name="Plasterk R.H."/>
            <person name="Lee C."/>
            <person name="Westerfield M."/>
            <person name="de Jong P.J."/>
            <person name="Zon L.I."/>
            <person name="Postlethwait J.H."/>
            <person name="Nusslein-Volhard C."/>
            <person name="Hubbard T.J."/>
            <person name="Roest Crollius H."/>
            <person name="Rogers J."/>
            <person name="Stemple D.L."/>
        </authorList>
    </citation>
    <scope>NUCLEOTIDE SEQUENCE [LARGE SCALE GENOMIC DNA]</scope>
    <source>
        <strain evidence="9">Tuebingen</strain>
    </source>
</reference>
<reference evidence="7" key="3">
    <citation type="submission" date="2008-04" db="EMBL/GenBank/DDBJ databases">
        <authorList>
            <consortium name="NIH - Zebrafish Gene Collection (ZGC) project"/>
        </authorList>
    </citation>
    <scope>NUCLEOTIDE SEQUENCE [LARGE SCALE MRNA]</scope>
    <source>
        <strain evidence="7">AB</strain>
    </source>
</reference>
<reference evidence="6" key="4">
    <citation type="journal article" date="2015" name="Hum. Mol. Genet.">
        <title>Knockout of RP2 decreases GRK1 and rod transducin subunits and leads to photoreceptor degeneration in zebrafish.</title>
        <authorList>
            <person name="Liu F."/>
            <person name="Chen J."/>
            <person name="Yu S."/>
            <person name="Raghupathy R.K."/>
            <person name="Liu X."/>
            <person name="Qin Y."/>
            <person name="Li C."/>
            <person name="Huang M."/>
            <person name="Liao S."/>
            <person name="Wang J."/>
            <person name="Zou J."/>
            <person name="Shu X."/>
            <person name="Tang Z."/>
            <person name="Liu M."/>
        </authorList>
    </citation>
    <scope>FUNCTION</scope>
    <scope>SUBCELLULAR LOCATION</scope>
    <scope>TISSUE SPECIFICITY</scope>
    <scope>DISRUPTION PHENOTYPE</scope>
</reference>
<feature type="initiator methionine" description="Removed" evidence="1">
    <location>
        <position position="1"/>
    </location>
</feature>
<feature type="chain" id="PRO_0000437371" description="Protein XRP2">
    <location>
        <begin position="2"/>
        <end position="376"/>
    </location>
</feature>
<feature type="domain" description="C-CAP/cofactor C-like" evidence="2">
    <location>
        <begin position="49"/>
        <end position="204"/>
    </location>
</feature>
<feature type="region of interest" description="Disordered" evidence="3">
    <location>
        <begin position="1"/>
        <end position="55"/>
    </location>
</feature>
<feature type="compositionally biased region" description="Polar residues" evidence="3">
    <location>
        <begin position="25"/>
        <end position="48"/>
    </location>
</feature>
<feature type="binding site" evidence="1">
    <location>
        <begin position="123"/>
        <end position="124"/>
    </location>
    <ligand>
        <name>GTP</name>
        <dbReference type="ChEBI" id="CHEBI:37565"/>
    </ligand>
</feature>
<feature type="binding site" evidence="1">
    <location>
        <begin position="140"/>
        <end position="143"/>
    </location>
    <ligand>
        <name>GTP</name>
        <dbReference type="ChEBI" id="CHEBI:37565"/>
    </ligand>
</feature>
<feature type="lipid moiety-binding region" description="N-myristoyl glycine" evidence="1">
    <location>
        <position position="2"/>
    </location>
</feature>
<feature type="lipid moiety-binding region" description="S-palmitoyl cysteine" evidence="1">
    <location>
        <position position="3"/>
    </location>
</feature>
<feature type="sequence conflict" description="In Ref. 1; ADR82635 and 3; AAH46879/AAI64845." evidence="6" ref="1 3">
    <original>Q</original>
    <variation>K</variation>
    <location>
        <position position="349"/>
    </location>
</feature>
<protein>
    <recommendedName>
        <fullName evidence="1">Protein XRP2</fullName>
    </recommendedName>
</protein>
<evidence type="ECO:0000250" key="1">
    <source>
        <dbReference type="UniProtKB" id="O75695"/>
    </source>
</evidence>
<evidence type="ECO:0000255" key="2">
    <source>
        <dbReference type="PROSITE-ProRule" id="PRU00659"/>
    </source>
</evidence>
<evidence type="ECO:0000256" key="3">
    <source>
        <dbReference type="SAM" id="MobiDB-lite"/>
    </source>
</evidence>
<evidence type="ECO:0000269" key="4">
    <source>
    </source>
</evidence>
<evidence type="ECO:0000269" key="5">
    <source>
    </source>
</evidence>
<evidence type="ECO:0000305" key="6"/>
<evidence type="ECO:0000312" key="7">
    <source>
        <dbReference type="EMBL" id="AAH46879.1"/>
    </source>
</evidence>
<evidence type="ECO:0000312" key="8">
    <source>
        <dbReference type="EMBL" id="ADR82635.1"/>
    </source>
</evidence>
<evidence type="ECO:0000312" key="9">
    <source>
        <dbReference type="Proteomes" id="UP000000437"/>
    </source>
</evidence>
<evidence type="ECO:0000312" key="10">
    <source>
        <dbReference type="ZFIN" id="ZDB-GENE-040426-2795"/>
    </source>
</evidence>
<keyword id="KW-1003">Cell membrane</keyword>
<keyword id="KW-0966">Cell projection</keyword>
<keyword id="KW-0342">GTP-binding</keyword>
<keyword id="KW-0343">GTPase activation</keyword>
<keyword id="KW-0449">Lipoprotein</keyword>
<keyword id="KW-0472">Membrane</keyword>
<keyword id="KW-0519">Myristate</keyword>
<keyword id="KW-0547">Nucleotide-binding</keyword>
<keyword id="KW-0564">Palmitate</keyword>
<keyword id="KW-0653">Protein transport</keyword>
<keyword id="KW-1185">Reference proteome</keyword>
<keyword id="KW-0813">Transport</keyword>
<sequence length="376" mass="41872">MGCFFSKKSRRKSPKKDAALPTGDESATGNDLAETNNTALGSNSNQEAPKQYSWDKREKVDPKDFMLTGLKNETVGRLPGKLNGQQFVIQDCENCNIFVLDHSATITIDDCVNCRIVLGPVKGSVFFRDCKDIKCVVACQQFRTRDCKKMDVFLCCATQPIIESSTGMKFGCFQYYYPELAFHFKDAGLSIFNNNWSNIHDFTPVSGETNWSLLPEDAVVLDHVPLPDPESEFKSVRIATEAGRSIVPLTKGSRRTESEESCLFVFFAGDYTTANARKLIDEATAKGFVLIQTKEVSMRPEDVSRVFQNNAESLTEWITKGPVVALELNGDGVVEACRSFANEVFNGTQLFVSESKNTSSRDVDNFFNFADMQMGL</sequence>
<name>XRP2_DANRE</name>
<dbReference type="EMBL" id="HQ641392">
    <property type="protein sequence ID" value="ADR82635.1"/>
    <property type="molecule type" value="mRNA"/>
</dbReference>
<dbReference type="EMBL" id="BX322552">
    <property type="status" value="NOT_ANNOTATED_CDS"/>
    <property type="molecule type" value="Genomic_DNA"/>
</dbReference>
<dbReference type="EMBL" id="BC046879">
    <property type="protein sequence ID" value="AAH46879.1"/>
    <property type="status" value="ALT_FRAME"/>
    <property type="molecule type" value="mRNA"/>
</dbReference>
<dbReference type="EMBL" id="BC164845">
    <property type="protein sequence ID" value="AAI64845.1"/>
    <property type="status" value="ALT_FRAME"/>
    <property type="molecule type" value="mRNA"/>
</dbReference>
<dbReference type="RefSeq" id="NP_998611.1">
    <property type="nucleotide sequence ID" value="NM_213446.1"/>
</dbReference>
<dbReference type="RefSeq" id="XP_005166034.1">
    <property type="nucleotide sequence ID" value="XM_005165977.2"/>
</dbReference>
<dbReference type="RefSeq" id="XP_005166035.1">
    <property type="nucleotide sequence ID" value="XM_005165978.1"/>
</dbReference>
<dbReference type="SMR" id="F1QC45"/>
<dbReference type="FunCoup" id="F1QC45">
    <property type="interactions" value="198"/>
</dbReference>
<dbReference type="STRING" id="7955.ENSDARP00000120363"/>
<dbReference type="PaxDb" id="7955-ENSDARP00000120363"/>
<dbReference type="Ensembl" id="ENSDART00000136920">
    <property type="protein sequence ID" value="ENSDARP00000120363"/>
    <property type="gene ID" value="ENSDARG00000044339"/>
</dbReference>
<dbReference type="Ensembl" id="ENSDART00000182707">
    <property type="protein sequence ID" value="ENSDARP00000155269"/>
    <property type="gene ID" value="ENSDARG00000044339"/>
</dbReference>
<dbReference type="GeneID" id="406755"/>
<dbReference type="KEGG" id="dre:406755"/>
<dbReference type="AGR" id="ZFIN:ZDB-GENE-040426-2795"/>
<dbReference type="CTD" id="6102"/>
<dbReference type="ZFIN" id="ZDB-GENE-040426-2795">
    <property type="gene designation" value="rp2"/>
</dbReference>
<dbReference type="eggNOG" id="KOG2512">
    <property type="taxonomic scope" value="Eukaryota"/>
</dbReference>
<dbReference type="HOGENOM" id="CLU_056119_0_0_1"/>
<dbReference type="InParanoid" id="F1QC45"/>
<dbReference type="OMA" id="KDYMLTG"/>
<dbReference type="OrthoDB" id="194775at2759"/>
<dbReference type="PhylomeDB" id="F1QC45"/>
<dbReference type="TreeFam" id="TF105832"/>
<dbReference type="Reactome" id="R-DRE-5624138">
    <property type="pathway name" value="Trafficking of myristoylated proteins to the cilium"/>
</dbReference>
<dbReference type="PRO" id="PR:F1QC45"/>
<dbReference type="Proteomes" id="UP000000437">
    <property type="component" value="Chromosome 6"/>
</dbReference>
<dbReference type="Bgee" id="ENSDARG00000044339">
    <property type="expression patterns" value="Expressed in cleaving embryo and 46 other cell types or tissues"/>
</dbReference>
<dbReference type="GO" id="GO:0005929">
    <property type="term" value="C:cilium"/>
    <property type="evidence" value="ECO:0000318"/>
    <property type="project" value="GO_Central"/>
</dbReference>
<dbReference type="GO" id="GO:1990075">
    <property type="term" value="C:periciliary membrane compartment"/>
    <property type="evidence" value="ECO:0000318"/>
    <property type="project" value="GO_Central"/>
</dbReference>
<dbReference type="GO" id="GO:0005525">
    <property type="term" value="F:GTP binding"/>
    <property type="evidence" value="ECO:0007669"/>
    <property type="project" value="UniProtKB-KW"/>
</dbReference>
<dbReference type="GO" id="GO:0005096">
    <property type="term" value="F:GTPase activator activity"/>
    <property type="evidence" value="ECO:0000318"/>
    <property type="project" value="GO_Central"/>
</dbReference>
<dbReference type="GO" id="GO:0061371">
    <property type="term" value="P:determination of heart left/right asymmetry"/>
    <property type="evidence" value="ECO:0000315"/>
    <property type="project" value="ZFIN"/>
</dbReference>
<dbReference type="GO" id="GO:0001947">
    <property type="term" value="P:heart looping"/>
    <property type="evidence" value="ECO:0000315"/>
    <property type="project" value="ZFIN"/>
</dbReference>
<dbReference type="GO" id="GO:0042461">
    <property type="term" value="P:photoreceptor cell development"/>
    <property type="evidence" value="ECO:0000315"/>
    <property type="project" value="ZFIN"/>
</dbReference>
<dbReference type="GO" id="GO:0045494">
    <property type="term" value="P:photoreceptor cell maintenance"/>
    <property type="evidence" value="ECO:0000315"/>
    <property type="project" value="ZFIN"/>
</dbReference>
<dbReference type="GO" id="GO:0035845">
    <property type="term" value="P:photoreceptor cell outer segment organization"/>
    <property type="evidence" value="ECO:0000315"/>
    <property type="project" value="ZFIN"/>
</dbReference>
<dbReference type="GO" id="GO:0006892">
    <property type="term" value="P:post-Golgi vesicle-mediated transport"/>
    <property type="evidence" value="ECO:0000318"/>
    <property type="project" value="GO_Central"/>
</dbReference>
<dbReference type="GO" id="GO:0048793">
    <property type="term" value="P:pronephros development"/>
    <property type="evidence" value="ECO:0000315"/>
    <property type="project" value="ZFIN"/>
</dbReference>
<dbReference type="GO" id="GO:0015031">
    <property type="term" value="P:protein transport"/>
    <property type="evidence" value="ECO:0007669"/>
    <property type="project" value="UniProtKB-KW"/>
</dbReference>
<dbReference type="GO" id="GO:0060041">
    <property type="term" value="P:retina development in camera-type eye"/>
    <property type="evidence" value="ECO:0000315"/>
    <property type="project" value="ZFIN"/>
</dbReference>
<dbReference type="GO" id="GO:0010842">
    <property type="term" value="P:retina layer formation"/>
    <property type="evidence" value="ECO:0000315"/>
    <property type="project" value="ZFIN"/>
</dbReference>
<dbReference type="FunFam" id="2.160.20.70:FF:000004">
    <property type="entry name" value="Protein XRP2"/>
    <property type="match status" value="1"/>
</dbReference>
<dbReference type="Gene3D" id="2.160.20.70">
    <property type="match status" value="1"/>
</dbReference>
<dbReference type="Gene3D" id="3.30.70.141">
    <property type="entry name" value="Nucleoside diphosphate kinase-like domain"/>
    <property type="match status" value="1"/>
</dbReference>
<dbReference type="InterPro" id="IPR017901">
    <property type="entry name" value="C-CAP_CF_C-like"/>
</dbReference>
<dbReference type="InterPro" id="IPR016098">
    <property type="entry name" value="CAP/MinC_C"/>
</dbReference>
<dbReference type="InterPro" id="IPR036223">
    <property type="entry name" value="CAP_C_sf"/>
</dbReference>
<dbReference type="InterPro" id="IPR006599">
    <property type="entry name" value="CARP_motif"/>
</dbReference>
<dbReference type="InterPro" id="IPR036850">
    <property type="entry name" value="NDK-like_dom_sf"/>
</dbReference>
<dbReference type="InterPro" id="IPR012945">
    <property type="entry name" value="Tubulin-bd_cofactor_C_dom"/>
</dbReference>
<dbReference type="InterPro" id="IPR039093">
    <property type="entry name" value="XRP2"/>
</dbReference>
<dbReference type="PANTHER" id="PTHR15440:SF0">
    <property type="entry name" value="PROTEIN XRP2"/>
    <property type="match status" value="1"/>
</dbReference>
<dbReference type="PANTHER" id="PTHR15440">
    <property type="entry name" value="XRP2 PROTEIN"/>
    <property type="match status" value="1"/>
</dbReference>
<dbReference type="Pfam" id="PF07986">
    <property type="entry name" value="TBCC"/>
    <property type="match status" value="1"/>
</dbReference>
<dbReference type="PIRSF" id="PIRSF037947">
    <property type="entry name" value="Protein_XRP2"/>
    <property type="match status" value="1"/>
</dbReference>
<dbReference type="SMART" id="SM00673">
    <property type="entry name" value="CARP"/>
    <property type="match status" value="2"/>
</dbReference>
<dbReference type="SUPFAM" id="SSF69340">
    <property type="entry name" value="C-terminal domain of adenylylcyclase associated protein"/>
    <property type="match status" value="1"/>
</dbReference>
<dbReference type="SUPFAM" id="SSF54919">
    <property type="entry name" value="Nucleoside diphosphate kinase, NDK"/>
    <property type="match status" value="1"/>
</dbReference>
<dbReference type="PROSITE" id="PS51329">
    <property type="entry name" value="C_CAP_COFACTOR_C"/>
    <property type="match status" value="1"/>
</dbReference>
<dbReference type="PROSITE" id="PS51374">
    <property type="entry name" value="NDPK_LIKE"/>
    <property type="match status" value="1"/>
</dbReference>
<proteinExistence type="evidence at protein level"/>